<reference key="1">
    <citation type="journal article" date="1998" name="DNA Res.">
        <title>Structural analysis of Arabidopsis thaliana chromosome 5. VI. Sequence features of the regions of 1,367,185 bp covered by 19 physically assigned P1 and TAC clones.</title>
        <authorList>
            <person name="Kotani H."/>
            <person name="Nakamura Y."/>
            <person name="Sato S."/>
            <person name="Asamizu E."/>
            <person name="Kaneko T."/>
            <person name="Miyajima N."/>
            <person name="Tabata S."/>
        </authorList>
    </citation>
    <scope>NUCLEOTIDE SEQUENCE [LARGE SCALE GENOMIC DNA]</scope>
    <source>
        <strain>cv. Columbia</strain>
    </source>
</reference>
<reference key="2">
    <citation type="journal article" date="2017" name="Plant J.">
        <title>Araport11: a complete reannotation of the Arabidopsis thaliana reference genome.</title>
        <authorList>
            <person name="Cheng C.Y."/>
            <person name="Krishnakumar V."/>
            <person name="Chan A.P."/>
            <person name="Thibaud-Nissen F."/>
            <person name="Schobel S."/>
            <person name="Town C.D."/>
        </authorList>
    </citation>
    <scope>GENOME REANNOTATION</scope>
    <source>
        <strain>cv. Columbia</strain>
    </source>
</reference>
<reference key="3">
    <citation type="journal article" date="2003" name="Science">
        <title>Empirical analysis of transcriptional activity in the Arabidopsis genome.</title>
        <authorList>
            <person name="Yamada K."/>
            <person name="Lim J."/>
            <person name="Dale J.M."/>
            <person name="Chen H."/>
            <person name="Shinn P."/>
            <person name="Palm C.J."/>
            <person name="Southwick A.M."/>
            <person name="Wu H.C."/>
            <person name="Kim C.J."/>
            <person name="Nguyen M."/>
            <person name="Pham P.K."/>
            <person name="Cheuk R.F."/>
            <person name="Karlin-Newmann G."/>
            <person name="Liu S.X."/>
            <person name="Lam B."/>
            <person name="Sakano H."/>
            <person name="Wu T."/>
            <person name="Yu G."/>
            <person name="Miranda M."/>
            <person name="Quach H.L."/>
            <person name="Tripp M."/>
            <person name="Chang C.H."/>
            <person name="Lee J.M."/>
            <person name="Toriumi M.J."/>
            <person name="Chan M.M."/>
            <person name="Tang C.C."/>
            <person name="Onodera C.S."/>
            <person name="Deng J.M."/>
            <person name="Akiyama K."/>
            <person name="Ansari Y."/>
            <person name="Arakawa T."/>
            <person name="Banh J."/>
            <person name="Banno F."/>
            <person name="Bowser L."/>
            <person name="Brooks S.Y."/>
            <person name="Carninci P."/>
            <person name="Chao Q."/>
            <person name="Choy N."/>
            <person name="Enju A."/>
            <person name="Goldsmith A.D."/>
            <person name="Gurjal M."/>
            <person name="Hansen N.F."/>
            <person name="Hayashizaki Y."/>
            <person name="Johnson-Hopson C."/>
            <person name="Hsuan V.W."/>
            <person name="Iida K."/>
            <person name="Karnes M."/>
            <person name="Khan S."/>
            <person name="Koesema E."/>
            <person name="Ishida J."/>
            <person name="Jiang P.X."/>
            <person name="Jones T."/>
            <person name="Kawai J."/>
            <person name="Kamiya A."/>
            <person name="Meyers C."/>
            <person name="Nakajima M."/>
            <person name="Narusaka M."/>
            <person name="Seki M."/>
            <person name="Sakurai T."/>
            <person name="Satou M."/>
            <person name="Tamse R."/>
            <person name="Vaysberg M."/>
            <person name="Wallender E.K."/>
            <person name="Wong C."/>
            <person name="Yamamura Y."/>
            <person name="Yuan S."/>
            <person name="Shinozaki K."/>
            <person name="Davis R.W."/>
            <person name="Theologis A."/>
            <person name="Ecker J.R."/>
        </authorList>
    </citation>
    <scope>NUCLEOTIDE SEQUENCE [LARGE SCALE MRNA]</scope>
    <source>
        <strain>cv. Columbia</strain>
    </source>
</reference>
<reference key="4">
    <citation type="journal article" date="1993" name="Plant Mol. Biol.">
        <title>Selection of Arabidopsis cDNAs that partially correct phenotypes of Escherichia coli DNA-damage-sensitive mutants and analysis of two plant cDNAs that appear to express UV-specific dark repair activities.</title>
        <authorList>
            <person name="Pang Q."/>
            <person name="Hays J.B."/>
            <person name="Rajagopal I."/>
            <person name="Schaefer T.S."/>
        </authorList>
    </citation>
    <scope>NUCLEOTIDE SEQUENCE [MRNA] OF 183-556</scope>
    <source>
        <strain>cv. Columbia</strain>
    </source>
</reference>
<reference key="5">
    <citation type="journal article" date="2008" name="J. Proteome Res.">
        <title>Site-specific phosphorylation profiling of Arabidopsis proteins by mass spectrometry and peptide chip analysis.</title>
        <authorList>
            <person name="de la Fuente van Bentem S."/>
            <person name="Anrather D."/>
            <person name="Dohnal I."/>
            <person name="Roitinger E."/>
            <person name="Csaszar E."/>
            <person name="Joore J."/>
            <person name="Buijnink J."/>
            <person name="Carreri A."/>
            <person name="Forzani C."/>
            <person name="Lorkovic Z.J."/>
            <person name="Barta A."/>
            <person name="Lecourieux D."/>
            <person name="Verhounig A."/>
            <person name="Jonak C."/>
            <person name="Hirt H."/>
        </authorList>
    </citation>
    <scope>PHOSPHORYLATION [LARGE SCALE ANALYSIS] AT SER-68</scope>
    <scope>IDENTIFICATION BY MASS SPECTROMETRY [LARGE SCALE ANALYSIS]</scope>
    <source>
        <tissue>Root</tissue>
    </source>
</reference>
<gene>
    <name type="primary">DRT101</name>
    <name type="ordered locus">At5g18070</name>
    <name type="ORF">MRG7.2</name>
</gene>
<feature type="chain" id="PRO_0000148015" description="Phosphoacetylglucosamine mutase">
    <location>
        <begin position="1"/>
        <end position="556"/>
    </location>
</feature>
<feature type="active site" description="Phosphoserine intermediate" evidence="2">
    <location>
        <position position="68"/>
    </location>
</feature>
<feature type="binding site" description="via phosphate group" evidence="2">
    <location>
        <position position="68"/>
    </location>
    <ligand>
        <name>Mg(2+)</name>
        <dbReference type="ChEBI" id="CHEBI:18420"/>
    </ligand>
</feature>
<feature type="binding site" evidence="2">
    <location>
        <position position="286"/>
    </location>
    <ligand>
        <name>Mg(2+)</name>
        <dbReference type="ChEBI" id="CHEBI:18420"/>
    </ligand>
</feature>
<feature type="binding site" evidence="2">
    <location>
        <position position="288"/>
    </location>
    <ligand>
        <name>Mg(2+)</name>
        <dbReference type="ChEBI" id="CHEBI:18420"/>
    </ligand>
</feature>
<feature type="binding site" evidence="2">
    <location>
        <position position="290"/>
    </location>
    <ligand>
        <name>Mg(2+)</name>
        <dbReference type="ChEBI" id="CHEBI:18420"/>
    </ligand>
</feature>
<feature type="binding site" evidence="2">
    <location>
        <begin position="386"/>
        <end position="388"/>
    </location>
    <ligand>
        <name>substrate</name>
    </ligand>
</feature>
<feature type="binding site" evidence="2">
    <location>
        <begin position="518"/>
        <end position="522"/>
    </location>
    <ligand>
        <name>substrate</name>
    </ligand>
</feature>
<feature type="binding site" evidence="2">
    <location>
        <position position="527"/>
    </location>
    <ligand>
        <name>substrate</name>
    </ligand>
</feature>
<feature type="modified residue" description="Phosphoserine" evidence="4">
    <location>
        <position position="68"/>
    </location>
</feature>
<accession>P57750</accession>
<accession>Q05211</accession>
<keyword id="KW-0227">DNA damage</keyword>
<keyword id="KW-0234">DNA repair</keyword>
<keyword id="KW-0413">Isomerase</keyword>
<keyword id="KW-0460">Magnesium</keyword>
<keyword id="KW-0479">Metal-binding</keyword>
<keyword id="KW-0597">Phosphoprotein</keyword>
<keyword id="KW-1185">Reference proteome</keyword>
<organism>
    <name type="scientific">Arabidopsis thaliana</name>
    <name type="common">Mouse-ear cress</name>
    <dbReference type="NCBI Taxonomy" id="3702"/>
    <lineage>
        <taxon>Eukaryota</taxon>
        <taxon>Viridiplantae</taxon>
        <taxon>Streptophyta</taxon>
        <taxon>Embryophyta</taxon>
        <taxon>Tracheophyta</taxon>
        <taxon>Spermatophyta</taxon>
        <taxon>Magnoliopsida</taxon>
        <taxon>eudicotyledons</taxon>
        <taxon>Gunneridae</taxon>
        <taxon>Pentapetalae</taxon>
        <taxon>rosids</taxon>
        <taxon>malvids</taxon>
        <taxon>Brassicales</taxon>
        <taxon>Brassicaceae</taxon>
        <taxon>Camelineae</taxon>
        <taxon>Arabidopsis</taxon>
    </lineage>
</organism>
<sequence length="556" mass="60391">MDEIQIASILKSSELFPIPQGVKLSYGTAGFRGDAKLLESTVYRVGILSALRSLKLGSATVGLMITASHNKVSDNGIKVSDPSGFMLSQEWEPFADQIANASSPEELVSLIRKFMEKEEIAIGENNKGAEVWLGRDTRPSGESLLRAGEIGVGSILGSVAIDIGILTTPQLHWMVRAKNKGLKATENDYFENLSTSFRCLIDLIPSSGNDKLEISKLLVDGANGVGGQKIEKLRGSLSNLDVEIRNTGRDGGVLNEGVGADFVQKEKVLPVGFGFKDVGMRCASLDGDADRLVYFYIPSDSSEKVELLDGDKILSLFALFIKEQLNALEDDEERKQSRLGVVQTAYANGASTDYLKHLGLDVVFAKTGVKHLHEKAAEFDIGIYFEANGHGTILFSESFLSWLVSKQKDLTAKGQGGSEEHKAVSRLMAVSNLINQAVGDALSGVLLVEVILQHLGWSIEKWNELYKDLPSRQIKVEVPDRTAVVTTSEETEALRPMGIQDAINSEIKKYSRGRAFIRPSGTEDVVRVYAEASTQEDADSLANSVAQLVKSFLGSS</sequence>
<evidence type="ECO:0000250" key="1"/>
<evidence type="ECO:0000250" key="2">
    <source>
        <dbReference type="UniProtKB" id="Q9P4V2"/>
    </source>
</evidence>
<evidence type="ECO:0000305" key="3"/>
<evidence type="ECO:0007744" key="4">
    <source>
    </source>
</evidence>
<dbReference type="EC" id="5.4.2.3"/>
<dbReference type="EMBL" id="AB012246">
    <property type="protein sequence ID" value="BAB09465.1"/>
    <property type="molecule type" value="Genomic_DNA"/>
</dbReference>
<dbReference type="EMBL" id="CP002688">
    <property type="protein sequence ID" value="AED92503.1"/>
    <property type="molecule type" value="Genomic_DNA"/>
</dbReference>
<dbReference type="EMBL" id="AY075620">
    <property type="protein sequence ID" value="AAL91631.1"/>
    <property type="molecule type" value="mRNA"/>
</dbReference>
<dbReference type="EMBL" id="L11367">
    <property type="protein sequence ID" value="AAA72352.1"/>
    <property type="status" value="ALT_SEQ"/>
    <property type="molecule type" value="mRNA"/>
</dbReference>
<dbReference type="PIR" id="S35270">
    <property type="entry name" value="S35270"/>
</dbReference>
<dbReference type="RefSeq" id="NP_568359.2">
    <property type="nucleotide sequence ID" value="NM_121812.3"/>
</dbReference>
<dbReference type="SMR" id="P57750"/>
<dbReference type="BioGRID" id="17202">
    <property type="interactions" value="1"/>
</dbReference>
<dbReference type="FunCoup" id="P57750">
    <property type="interactions" value="3871"/>
</dbReference>
<dbReference type="STRING" id="3702.P57750"/>
<dbReference type="iPTMnet" id="P57750"/>
<dbReference type="PaxDb" id="3702-AT5G18070.1"/>
<dbReference type="ProteomicsDB" id="244657"/>
<dbReference type="EnsemblPlants" id="AT5G18070.1">
    <property type="protein sequence ID" value="AT5G18070.1"/>
    <property type="gene ID" value="AT5G18070"/>
</dbReference>
<dbReference type="GeneID" id="831926"/>
<dbReference type="Gramene" id="AT5G18070.1">
    <property type="protein sequence ID" value="AT5G18070.1"/>
    <property type="gene ID" value="AT5G18070"/>
</dbReference>
<dbReference type="KEGG" id="ath:AT5G18070"/>
<dbReference type="Araport" id="AT5G18070"/>
<dbReference type="TAIR" id="AT5G18070">
    <property type="gene designation" value="DRT101"/>
</dbReference>
<dbReference type="eggNOG" id="KOG2537">
    <property type="taxonomic scope" value="Eukaryota"/>
</dbReference>
<dbReference type="HOGENOM" id="CLU_022890_1_0_1"/>
<dbReference type="InParanoid" id="P57750"/>
<dbReference type="OMA" id="WEAYATK"/>
<dbReference type="PhylomeDB" id="P57750"/>
<dbReference type="BioCyc" id="ARA:AT5G18070-MONOMER"/>
<dbReference type="UniPathway" id="UPA00113">
    <property type="reaction ID" value="UER00530"/>
</dbReference>
<dbReference type="PRO" id="PR:P57750"/>
<dbReference type="Proteomes" id="UP000006548">
    <property type="component" value="Chromosome 5"/>
</dbReference>
<dbReference type="ExpressionAtlas" id="P57750">
    <property type="expression patterns" value="baseline and differential"/>
</dbReference>
<dbReference type="GO" id="GO:0005739">
    <property type="term" value="C:mitochondrion"/>
    <property type="evidence" value="ECO:0007005"/>
    <property type="project" value="TAIR"/>
</dbReference>
<dbReference type="GO" id="GO:0009506">
    <property type="term" value="C:plasmodesma"/>
    <property type="evidence" value="ECO:0007005"/>
    <property type="project" value="TAIR"/>
</dbReference>
<dbReference type="GO" id="GO:0046872">
    <property type="term" value="F:metal ion binding"/>
    <property type="evidence" value="ECO:0007669"/>
    <property type="project" value="UniProtKB-KW"/>
</dbReference>
<dbReference type="GO" id="GO:0004610">
    <property type="term" value="F:phosphoacetylglucosamine mutase activity"/>
    <property type="evidence" value="ECO:0007669"/>
    <property type="project" value="UniProtKB-EC"/>
</dbReference>
<dbReference type="GO" id="GO:0005975">
    <property type="term" value="P:carbohydrate metabolic process"/>
    <property type="evidence" value="ECO:0007669"/>
    <property type="project" value="InterPro"/>
</dbReference>
<dbReference type="GO" id="GO:0006281">
    <property type="term" value="P:DNA repair"/>
    <property type="evidence" value="ECO:0007669"/>
    <property type="project" value="UniProtKB-KW"/>
</dbReference>
<dbReference type="GO" id="GO:0006048">
    <property type="term" value="P:UDP-N-acetylglucosamine biosynthetic process"/>
    <property type="evidence" value="ECO:0007669"/>
    <property type="project" value="UniProtKB-UniPathway"/>
</dbReference>
<dbReference type="CDD" id="cd03086">
    <property type="entry name" value="PGM3"/>
    <property type="match status" value="1"/>
</dbReference>
<dbReference type="FunFam" id="3.30.310.50:FF:000003">
    <property type="entry name" value="Phosphoacetylglucosamine mutase"/>
    <property type="match status" value="1"/>
</dbReference>
<dbReference type="FunFam" id="3.40.120.10:FF:000013">
    <property type="entry name" value="Phosphoacetylglucosamine mutase"/>
    <property type="match status" value="1"/>
</dbReference>
<dbReference type="FunFam" id="3.40.120.10:FF:000047">
    <property type="entry name" value="Phosphoacetylglucosamine mutase"/>
    <property type="match status" value="1"/>
</dbReference>
<dbReference type="FunFam" id="3.40.120.10:FF:000054">
    <property type="entry name" value="Phosphoacetylglucosamine mutase"/>
    <property type="match status" value="1"/>
</dbReference>
<dbReference type="Gene3D" id="3.40.120.10">
    <property type="entry name" value="Alpha-D-Glucose-1,6-Bisphosphate, subunit A, domain 3"/>
    <property type="match status" value="3"/>
</dbReference>
<dbReference type="Gene3D" id="3.30.310.50">
    <property type="entry name" value="Alpha-D-phosphohexomutase, C-terminal domain"/>
    <property type="match status" value="1"/>
</dbReference>
<dbReference type="InterPro" id="IPR005844">
    <property type="entry name" value="A-D-PHexomutase_a/b/a-I"/>
</dbReference>
<dbReference type="InterPro" id="IPR016055">
    <property type="entry name" value="A-D-PHexomutase_a/b/a-I/II/III"/>
</dbReference>
<dbReference type="InterPro" id="IPR005843">
    <property type="entry name" value="A-D-PHexomutase_C"/>
</dbReference>
<dbReference type="InterPro" id="IPR036900">
    <property type="entry name" value="A-D-PHexomutase_C_sf"/>
</dbReference>
<dbReference type="InterPro" id="IPR049023">
    <property type="entry name" value="AMG1_II"/>
</dbReference>
<dbReference type="InterPro" id="IPR049022">
    <property type="entry name" value="AMG1_III"/>
</dbReference>
<dbReference type="InterPro" id="IPR016657">
    <property type="entry name" value="PAGM"/>
</dbReference>
<dbReference type="PANTHER" id="PTHR45955">
    <property type="entry name" value="PHOSPHOACETYLGLUCOSAMINE MUTASE"/>
    <property type="match status" value="1"/>
</dbReference>
<dbReference type="PANTHER" id="PTHR45955:SF1">
    <property type="entry name" value="PHOSPHOACETYLGLUCOSAMINE MUTASE"/>
    <property type="match status" value="1"/>
</dbReference>
<dbReference type="Pfam" id="PF21405">
    <property type="entry name" value="AMG1_II"/>
    <property type="match status" value="1"/>
</dbReference>
<dbReference type="Pfam" id="PF21404">
    <property type="entry name" value="AMG1_III"/>
    <property type="match status" value="1"/>
</dbReference>
<dbReference type="Pfam" id="PF02878">
    <property type="entry name" value="PGM_PMM_I"/>
    <property type="match status" value="1"/>
</dbReference>
<dbReference type="Pfam" id="PF00408">
    <property type="entry name" value="PGM_PMM_IV"/>
    <property type="match status" value="1"/>
</dbReference>
<dbReference type="PIRSF" id="PIRSF016408">
    <property type="entry name" value="PAGM"/>
    <property type="match status" value="1"/>
</dbReference>
<dbReference type="SUPFAM" id="SSF55957">
    <property type="entry name" value="Phosphoglucomutase, C-terminal domain"/>
    <property type="match status" value="1"/>
</dbReference>
<dbReference type="SUPFAM" id="SSF53738">
    <property type="entry name" value="Phosphoglucomutase, first 3 domains"/>
    <property type="match status" value="4"/>
</dbReference>
<protein>
    <recommendedName>
        <fullName>Phosphoacetylglucosamine mutase</fullName>
        <shortName>PAGM</shortName>
        <ecNumber>5.4.2.3</ecNumber>
    </recommendedName>
    <alternativeName>
        <fullName>Acetylglucosamine phosphomutase</fullName>
    </alternativeName>
    <alternativeName>
        <fullName>DNA-damage-repair/toleration protein DRT101</fullName>
    </alternativeName>
    <alternativeName>
        <fullName>N-acetylglucosamine-phosphate mutase</fullName>
    </alternativeName>
</protein>
<comment type="function">
    <text evidence="1">Interconverts GlcNAc-6-P and GlcNAc-1-P.</text>
</comment>
<comment type="catalytic activity">
    <reaction>
        <text>N-acetyl-alpha-D-glucosamine 1-phosphate = N-acetyl-D-glucosamine 6-phosphate</text>
        <dbReference type="Rhea" id="RHEA:23804"/>
        <dbReference type="ChEBI" id="CHEBI:57513"/>
        <dbReference type="ChEBI" id="CHEBI:57776"/>
        <dbReference type="EC" id="5.4.2.3"/>
    </reaction>
</comment>
<comment type="cofactor">
    <cofactor evidence="2">
        <name>Mg(2+)</name>
        <dbReference type="ChEBI" id="CHEBI:18420"/>
    </cofactor>
    <text evidence="2">Binds 1 Mg(2+) ion per subunit.</text>
</comment>
<comment type="pathway">
    <text>Nucleotide-sugar biosynthesis; UDP-N-acetyl-alpha-D-glucosamine biosynthesis; N-acetyl-alpha-D-glucosamine 1-phosphate from alpha-D-glucosamine 6-phosphate (route I): step 2/2.</text>
</comment>
<comment type="similarity">
    <text evidence="3">Belongs to the phosphohexose mutase family.</text>
</comment>
<comment type="sequence caution" evidence="3">
    <conflict type="miscellaneous discrepancy">
        <sequence resource="EMBL-CDS" id="AAA72352"/>
    </conflict>
    <text>Sequencing errors.</text>
</comment>
<proteinExistence type="evidence at protein level"/>
<name>AGM1_ARATH</name>